<dbReference type="EC" id="4.2.3.4" evidence="1"/>
<dbReference type="EMBL" id="AE017194">
    <property type="protein sequence ID" value="AAS40573.1"/>
    <property type="molecule type" value="Genomic_DNA"/>
</dbReference>
<dbReference type="SMR" id="Q73AX8"/>
<dbReference type="KEGG" id="bca:BCE_1644"/>
<dbReference type="HOGENOM" id="CLU_001201_0_2_9"/>
<dbReference type="UniPathway" id="UPA00053">
    <property type="reaction ID" value="UER00085"/>
</dbReference>
<dbReference type="Proteomes" id="UP000002527">
    <property type="component" value="Chromosome"/>
</dbReference>
<dbReference type="GO" id="GO:0005737">
    <property type="term" value="C:cytoplasm"/>
    <property type="evidence" value="ECO:0007669"/>
    <property type="project" value="UniProtKB-SubCell"/>
</dbReference>
<dbReference type="GO" id="GO:0003856">
    <property type="term" value="F:3-dehydroquinate synthase activity"/>
    <property type="evidence" value="ECO:0007669"/>
    <property type="project" value="UniProtKB-UniRule"/>
</dbReference>
<dbReference type="GO" id="GO:0046872">
    <property type="term" value="F:metal ion binding"/>
    <property type="evidence" value="ECO:0007669"/>
    <property type="project" value="UniProtKB-KW"/>
</dbReference>
<dbReference type="GO" id="GO:0000166">
    <property type="term" value="F:nucleotide binding"/>
    <property type="evidence" value="ECO:0007669"/>
    <property type="project" value="UniProtKB-KW"/>
</dbReference>
<dbReference type="GO" id="GO:0008652">
    <property type="term" value="P:amino acid biosynthetic process"/>
    <property type="evidence" value="ECO:0007669"/>
    <property type="project" value="UniProtKB-KW"/>
</dbReference>
<dbReference type="GO" id="GO:0009073">
    <property type="term" value="P:aromatic amino acid family biosynthetic process"/>
    <property type="evidence" value="ECO:0007669"/>
    <property type="project" value="UniProtKB-KW"/>
</dbReference>
<dbReference type="GO" id="GO:0009423">
    <property type="term" value="P:chorismate biosynthetic process"/>
    <property type="evidence" value="ECO:0007669"/>
    <property type="project" value="UniProtKB-UniRule"/>
</dbReference>
<dbReference type="CDD" id="cd08195">
    <property type="entry name" value="DHQS"/>
    <property type="match status" value="1"/>
</dbReference>
<dbReference type="FunFam" id="1.20.1090.10:FF:000008">
    <property type="entry name" value="3-dehydroquinate synthase"/>
    <property type="match status" value="1"/>
</dbReference>
<dbReference type="FunFam" id="3.40.50.1970:FF:000001">
    <property type="entry name" value="3-dehydroquinate synthase"/>
    <property type="match status" value="1"/>
</dbReference>
<dbReference type="Gene3D" id="3.40.50.1970">
    <property type="match status" value="1"/>
</dbReference>
<dbReference type="Gene3D" id="1.20.1090.10">
    <property type="entry name" value="Dehydroquinate synthase-like - alpha domain"/>
    <property type="match status" value="1"/>
</dbReference>
<dbReference type="HAMAP" id="MF_00110">
    <property type="entry name" value="DHQ_synthase"/>
    <property type="match status" value="1"/>
</dbReference>
<dbReference type="InterPro" id="IPR050071">
    <property type="entry name" value="Dehydroquinate_synthase"/>
</dbReference>
<dbReference type="InterPro" id="IPR016037">
    <property type="entry name" value="DHQ_synth_AroB"/>
</dbReference>
<dbReference type="InterPro" id="IPR030963">
    <property type="entry name" value="DHQ_synth_fam"/>
</dbReference>
<dbReference type="InterPro" id="IPR030960">
    <property type="entry name" value="DHQS/DOIS_N"/>
</dbReference>
<dbReference type="InterPro" id="IPR056179">
    <property type="entry name" value="DHQS_C"/>
</dbReference>
<dbReference type="NCBIfam" id="TIGR01357">
    <property type="entry name" value="aroB"/>
    <property type="match status" value="1"/>
</dbReference>
<dbReference type="PANTHER" id="PTHR43622">
    <property type="entry name" value="3-DEHYDROQUINATE SYNTHASE"/>
    <property type="match status" value="1"/>
</dbReference>
<dbReference type="PANTHER" id="PTHR43622:SF7">
    <property type="entry name" value="3-DEHYDROQUINATE SYNTHASE, CHLOROPLASTIC"/>
    <property type="match status" value="1"/>
</dbReference>
<dbReference type="Pfam" id="PF01761">
    <property type="entry name" value="DHQ_synthase"/>
    <property type="match status" value="1"/>
</dbReference>
<dbReference type="Pfam" id="PF24621">
    <property type="entry name" value="DHQS_C"/>
    <property type="match status" value="1"/>
</dbReference>
<dbReference type="PIRSF" id="PIRSF001455">
    <property type="entry name" value="DHQ_synth"/>
    <property type="match status" value="1"/>
</dbReference>
<dbReference type="SUPFAM" id="SSF56796">
    <property type="entry name" value="Dehydroquinate synthase-like"/>
    <property type="match status" value="1"/>
</dbReference>
<organism>
    <name type="scientific">Bacillus cereus (strain ATCC 10987 / NRS 248)</name>
    <dbReference type="NCBI Taxonomy" id="222523"/>
    <lineage>
        <taxon>Bacteria</taxon>
        <taxon>Bacillati</taxon>
        <taxon>Bacillota</taxon>
        <taxon>Bacilli</taxon>
        <taxon>Bacillales</taxon>
        <taxon>Bacillaceae</taxon>
        <taxon>Bacillus</taxon>
        <taxon>Bacillus cereus group</taxon>
    </lineage>
</organism>
<feature type="chain" id="PRO_0000231063" description="3-dehydroquinate synthase">
    <location>
        <begin position="1"/>
        <end position="361"/>
    </location>
</feature>
<feature type="binding site" evidence="1">
    <location>
        <begin position="72"/>
        <end position="77"/>
    </location>
    <ligand>
        <name>NAD(+)</name>
        <dbReference type="ChEBI" id="CHEBI:57540"/>
    </ligand>
</feature>
<feature type="binding site" evidence="1">
    <location>
        <begin position="130"/>
        <end position="131"/>
    </location>
    <ligand>
        <name>NAD(+)</name>
        <dbReference type="ChEBI" id="CHEBI:57540"/>
    </ligand>
</feature>
<feature type="binding site" evidence="1">
    <location>
        <position position="142"/>
    </location>
    <ligand>
        <name>NAD(+)</name>
        <dbReference type="ChEBI" id="CHEBI:57540"/>
    </ligand>
</feature>
<feature type="binding site" evidence="1">
    <location>
        <position position="151"/>
    </location>
    <ligand>
        <name>NAD(+)</name>
        <dbReference type="ChEBI" id="CHEBI:57540"/>
    </ligand>
</feature>
<feature type="binding site" evidence="1">
    <location>
        <position position="184"/>
    </location>
    <ligand>
        <name>Zn(2+)</name>
        <dbReference type="ChEBI" id="CHEBI:29105"/>
    </ligand>
</feature>
<feature type="binding site" evidence="1">
    <location>
        <position position="247"/>
    </location>
    <ligand>
        <name>Zn(2+)</name>
        <dbReference type="ChEBI" id="CHEBI:29105"/>
    </ligand>
</feature>
<feature type="binding site" evidence="1">
    <location>
        <position position="264"/>
    </location>
    <ligand>
        <name>Zn(2+)</name>
        <dbReference type="ChEBI" id="CHEBI:29105"/>
    </ligand>
</feature>
<proteinExistence type="inferred from homology"/>
<reference key="1">
    <citation type="journal article" date="2004" name="Nucleic Acids Res.">
        <title>The genome sequence of Bacillus cereus ATCC 10987 reveals metabolic adaptations and a large plasmid related to Bacillus anthracis pXO1.</title>
        <authorList>
            <person name="Rasko D.A."/>
            <person name="Ravel J."/>
            <person name="Oekstad O.A."/>
            <person name="Helgason E."/>
            <person name="Cer R.Z."/>
            <person name="Jiang L."/>
            <person name="Shores K.A."/>
            <person name="Fouts D.E."/>
            <person name="Tourasse N.J."/>
            <person name="Angiuoli S.V."/>
            <person name="Kolonay J.F."/>
            <person name="Nelson W.C."/>
            <person name="Kolstoe A.-B."/>
            <person name="Fraser C.M."/>
            <person name="Read T.D."/>
        </authorList>
    </citation>
    <scope>NUCLEOTIDE SEQUENCE [LARGE SCALE GENOMIC DNA]</scope>
    <source>
        <strain>ATCC 10987 / NRS 248</strain>
    </source>
</reference>
<sequence length="361" mass="40060">MGNIHIQTKSKEYDVYVGKESLSHLTTIVQNMKPSVSNIMIISDEAVASLHLQMVVDALQIEKKVFSFVVPSGEKEKSFENFYAAHTSALENKLDRNSLIIALGGGMIGDLAGFVAASFMRGIRFVQVPTTLLAHDSAVGGKVAINHPLGKNMIGAFHQPEAVVYHTPFLQSLPEKEWRSGYAEVIKHALIGDVKLYHWLKEEVQTLADLRDEKLIHILTKAIPVKANIVAQDETEKGVRAHLNFGHTLGHALEKELGYGNITHGDGVAVGMLFAIFLSEQVYKVNLAYEEMKQWFLKYGYPKMPSDLNVERLVGLMKQDKKANAGAIHMVLMQEYGVVNVVSIPDETVHIALEAFQKDMV</sequence>
<evidence type="ECO:0000255" key="1">
    <source>
        <dbReference type="HAMAP-Rule" id="MF_00110"/>
    </source>
</evidence>
<name>AROB_BACC1</name>
<gene>
    <name evidence="1" type="primary">aroB</name>
    <name type="ordered locus">BCE_1644</name>
</gene>
<comment type="function">
    <text evidence="1">Catalyzes the conversion of 3-deoxy-D-arabino-heptulosonate 7-phosphate (DAHP) to dehydroquinate (DHQ).</text>
</comment>
<comment type="catalytic activity">
    <reaction evidence="1">
        <text>7-phospho-2-dehydro-3-deoxy-D-arabino-heptonate = 3-dehydroquinate + phosphate</text>
        <dbReference type="Rhea" id="RHEA:21968"/>
        <dbReference type="ChEBI" id="CHEBI:32364"/>
        <dbReference type="ChEBI" id="CHEBI:43474"/>
        <dbReference type="ChEBI" id="CHEBI:58394"/>
        <dbReference type="EC" id="4.2.3.4"/>
    </reaction>
</comment>
<comment type="cofactor">
    <cofactor evidence="1">
        <name>Co(2+)</name>
        <dbReference type="ChEBI" id="CHEBI:48828"/>
    </cofactor>
    <cofactor evidence="1">
        <name>Zn(2+)</name>
        <dbReference type="ChEBI" id="CHEBI:29105"/>
    </cofactor>
    <text evidence="1">Binds 1 divalent metal cation per subunit. Can use either Co(2+) or Zn(2+).</text>
</comment>
<comment type="cofactor">
    <cofactor evidence="1">
        <name>NAD(+)</name>
        <dbReference type="ChEBI" id="CHEBI:57540"/>
    </cofactor>
</comment>
<comment type="pathway">
    <text evidence="1">Metabolic intermediate biosynthesis; chorismate biosynthesis; chorismate from D-erythrose 4-phosphate and phosphoenolpyruvate: step 2/7.</text>
</comment>
<comment type="subcellular location">
    <subcellularLocation>
        <location evidence="1">Cytoplasm</location>
    </subcellularLocation>
</comment>
<comment type="similarity">
    <text evidence="1">Belongs to the sugar phosphate cyclases superfamily. Dehydroquinate synthase family.</text>
</comment>
<keyword id="KW-0028">Amino-acid biosynthesis</keyword>
<keyword id="KW-0057">Aromatic amino acid biosynthesis</keyword>
<keyword id="KW-0170">Cobalt</keyword>
<keyword id="KW-0963">Cytoplasm</keyword>
<keyword id="KW-0456">Lyase</keyword>
<keyword id="KW-0479">Metal-binding</keyword>
<keyword id="KW-0520">NAD</keyword>
<keyword id="KW-0547">Nucleotide-binding</keyword>
<keyword id="KW-0862">Zinc</keyword>
<protein>
    <recommendedName>
        <fullName evidence="1">3-dehydroquinate synthase</fullName>
        <shortName evidence="1">DHQS</shortName>
        <ecNumber evidence="1">4.2.3.4</ecNumber>
    </recommendedName>
</protein>
<accession>Q73AX8</accession>